<proteinExistence type="inferred from homology"/>
<keyword id="KW-0963">Cytoplasm</keyword>
<keyword id="KW-0444">Lipid biosynthesis</keyword>
<keyword id="KW-0443">Lipid metabolism</keyword>
<keyword id="KW-0520">NAD</keyword>
<keyword id="KW-0521">NADP</keyword>
<keyword id="KW-0547">Nucleotide-binding</keyword>
<keyword id="KW-0560">Oxidoreductase</keyword>
<keyword id="KW-0594">Phospholipid biosynthesis</keyword>
<keyword id="KW-1208">Phospholipid metabolism</keyword>
<gene>
    <name evidence="1" type="primary">gpsA</name>
    <name type="ordered locus">SG2184</name>
</gene>
<name>GPDA_SODGM</name>
<reference key="1">
    <citation type="journal article" date="2006" name="Genome Res.">
        <title>Massive genome erosion and functional adaptations provide insights into the symbiotic lifestyle of Sodalis glossinidius in the tsetse host.</title>
        <authorList>
            <person name="Toh H."/>
            <person name="Weiss B.L."/>
            <person name="Perkin S.A.H."/>
            <person name="Yamashita A."/>
            <person name="Oshima K."/>
            <person name="Hattori M."/>
            <person name="Aksoy S."/>
        </authorList>
    </citation>
    <scope>NUCLEOTIDE SEQUENCE [LARGE SCALE GENOMIC DNA]</scope>
    <source>
        <strain>morsitans</strain>
    </source>
</reference>
<dbReference type="EC" id="1.1.1.94" evidence="1"/>
<dbReference type="EMBL" id="AP008232">
    <property type="protein sequence ID" value="BAE75459.1"/>
    <property type="molecule type" value="Genomic_DNA"/>
</dbReference>
<dbReference type="RefSeq" id="WP_011411996.1">
    <property type="nucleotide sequence ID" value="NC_007712.1"/>
</dbReference>
<dbReference type="SMR" id="Q2NQW6"/>
<dbReference type="STRING" id="343509.SG2184"/>
<dbReference type="KEGG" id="sgl:SG2184"/>
<dbReference type="eggNOG" id="COG0240">
    <property type="taxonomic scope" value="Bacteria"/>
</dbReference>
<dbReference type="HOGENOM" id="CLU_033449_0_2_6"/>
<dbReference type="OrthoDB" id="9812273at2"/>
<dbReference type="BioCyc" id="SGLO343509:SGP1_RS20125-MONOMER"/>
<dbReference type="UniPathway" id="UPA00940"/>
<dbReference type="Proteomes" id="UP000001932">
    <property type="component" value="Chromosome"/>
</dbReference>
<dbReference type="GO" id="GO:0005829">
    <property type="term" value="C:cytosol"/>
    <property type="evidence" value="ECO:0007669"/>
    <property type="project" value="TreeGrafter"/>
</dbReference>
<dbReference type="GO" id="GO:0047952">
    <property type="term" value="F:glycerol-3-phosphate dehydrogenase [NAD(P)+] activity"/>
    <property type="evidence" value="ECO:0007669"/>
    <property type="project" value="UniProtKB-UniRule"/>
</dbReference>
<dbReference type="GO" id="GO:0051287">
    <property type="term" value="F:NAD binding"/>
    <property type="evidence" value="ECO:0007669"/>
    <property type="project" value="InterPro"/>
</dbReference>
<dbReference type="GO" id="GO:0005975">
    <property type="term" value="P:carbohydrate metabolic process"/>
    <property type="evidence" value="ECO:0007669"/>
    <property type="project" value="InterPro"/>
</dbReference>
<dbReference type="GO" id="GO:0046167">
    <property type="term" value="P:glycerol-3-phosphate biosynthetic process"/>
    <property type="evidence" value="ECO:0007669"/>
    <property type="project" value="UniProtKB-UniRule"/>
</dbReference>
<dbReference type="GO" id="GO:0046168">
    <property type="term" value="P:glycerol-3-phosphate catabolic process"/>
    <property type="evidence" value="ECO:0007669"/>
    <property type="project" value="InterPro"/>
</dbReference>
<dbReference type="GO" id="GO:0046474">
    <property type="term" value="P:glycerophospholipid biosynthetic process"/>
    <property type="evidence" value="ECO:0007669"/>
    <property type="project" value="TreeGrafter"/>
</dbReference>
<dbReference type="FunFam" id="1.10.1040.10:FF:000001">
    <property type="entry name" value="Glycerol-3-phosphate dehydrogenase [NAD(P)+]"/>
    <property type="match status" value="1"/>
</dbReference>
<dbReference type="FunFam" id="3.40.50.720:FF:000019">
    <property type="entry name" value="Glycerol-3-phosphate dehydrogenase [NAD(P)+]"/>
    <property type="match status" value="1"/>
</dbReference>
<dbReference type="Gene3D" id="1.10.1040.10">
    <property type="entry name" value="N-(1-d-carboxylethyl)-l-norvaline Dehydrogenase, domain 2"/>
    <property type="match status" value="1"/>
</dbReference>
<dbReference type="Gene3D" id="3.40.50.720">
    <property type="entry name" value="NAD(P)-binding Rossmann-like Domain"/>
    <property type="match status" value="1"/>
</dbReference>
<dbReference type="HAMAP" id="MF_00394">
    <property type="entry name" value="NAD_Glyc3P_dehydrog"/>
    <property type="match status" value="1"/>
</dbReference>
<dbReference type="InterPro" id="IPR008927">
    <property type="entry name" value="6-PGluconate_DH-like_C_sf"/>
</dbReference>
<dbReference type="InterPro" id="IPR013328">
    <property type="entry name" value="6PGD_dom2"/>
</dbReference>
<dbReference type="InterPro" id="IPR006168">
    <property type="entry name" value="G3P_DH_NAD-dep"/>
</dbReference>
<dbReference type="InterPro" id="IPR006109">
    <property type="entry name" value="G3P_DH_NAD-dep_C"/>
</dbReference>
<dbReference type="InterPro" id="IPR011128">
    <property type="entry name" value="G3P_DH_NAD-dep_N"/>
</dbReference>
<dbReference type="InterPro" id="IPR036291">
    <property type="entry name" value="NAD(P)-bd_dom_sf"/>
</dbReference>
<dbReference type="NCBIfam" id="NF000939">
    <property type="entry name" value="PRK00094.1-1"/>
    <property type="match status" value="1"/>
</dbReference>
<dbReference type="NCBIfam" id="NF000940">
    <property type="entry name" value="PRK00094.1-2"/>
    <property type="match status" value="1"/>
</dbReference>
<dbReference type="NCBIfam" id="NF000942">
    <property type="entry name" value="PRK00094.1-4"/>
    <property type="match status" value="1"/>
</dbReference>
<dbReference type="PANTHER" id="PTHR11728">
    <property type="entry name" value="GLYCEROL-3-PHOSPHATE DEHYDROGENASE"/>
    <property type="match status" value="1"/>
</dbReference>
<dbReference type="PANTHER" id="PTHR11728:SF1">
    <property type="entry name" value="GLYCEROL-3-PHOSPHATE DEHYDROGENASE [NAD(+)] 2, CHLOROPLASTIC"/>
    <property type="match status" value="1"/>
</dbReference>
<dbReference type="Pfam" id="PF07479">
    <property type="entry name" value="NAD_Gly3P_dh_C"/>
    <property type="match status" value="1"/>
</dbReference>
<dbReference type="Pfam" id="PF01210">
    <property type="entry name" value="NAD_Gly3P_dh_N"/>
    <property type="match status" value="1"/>
</dbReference>
<dbReference type="PIRSF" id="PIRSF000114">
    <property type="entry name" value="Glycerol-3-P_dh"/>
    <property type="match status" value="1"/>
</dbReference>
<dbReference type="PRINTS" id="PR00077">
    <property type="entry name" value="GPDHDRGNASE"/>
</dbReference>
<dbReference type="SUPFAM" id="SSF48179">
    <property type="entry name" value="6-phosphogluconate dehydrogenase C-terminal domain-like"/>
    <property type="match status" value="1"/>
</dbReference>
<dbReference type="SUPFAM" id="SSF51735">
    <property type="entry name" value="NAD(P)-binding Rossmann-fold domains"/>
    <property type="match status" value="1"/>
</dbReference>
<dbReference type="PROSITE" id="PS00957">
    <property type="entry name" value="NAD_G3PDH"/>
    <property type="match status" value="1"/>
</dbReference>
<evidence type="ECO:0000255" key="1">
    <source>
        <dbReference type="HAMAP-Rule" id="MF_00394"/>
    </source>
</evidence>
<feature type="chain" id="PRO_0000255373" description="Glycerol-3-phosphate dehydrogenase [NAD(P)+]">
    <location>
        <begin position="1"/>
        <end position="338"/>
    </location>
</feature>
<feature type="active site" description="Proton acceptor" evidence="1">
    <location>
        <position position="194"/>
    </location>
</feature>
<feature type="binding site" evidence="1">
    <location>
        <position position="14"/>
    </location>
    <ligand>
        <name>NADPH</name>
        <dbReference type="ChEBI" id="CHEBI:57783"/>
    </ligand>
</feature>
<feature type="binding site" evidence="1">
    <location>
        <position position="15"/>
    </location>
    <ligand>
        <name>NADPH</name>
        <dbReference type="ChEBI" id="CHEBI:57783"/>
    </ligand>
</feature>
<feature type="binding site" evidence="1">
    <location>
        <position position="35"/>
    </location>
    <ligand>
        <name>NADPH</name>
        <dbReference type="ChEBI" id="CHEBI:57783"/>
    </ligand>
</feature>
<feature type="binding site" evidence="1">
    <location>
        <position position="109"/>
    </location>
    <ligand>
        <name>NADPH</name>
        <dbReference type="ChEBI" id="CHEBI:57783"/>
    </ligand>
</feature>
<feature type="binding site" evidence="1">
    <location>
        <position position="109"/>
    </location>
    <ligand>
        <name>sn-glycerol 3-phosphate</name>
        <dbReference type="ChEBI" id="CHEBI:57597"/>
    </ligand>
</feature>
<feature type="binding site" evidence="1">
    <location>
        <position position="138"/>
    </location>
    <ligand>
        <name>sn-glycerol 3-phosphate</name>
        <dbReference type="ChEBI" id="CHEBI:57597"/>
    </ligand>
</feature>
<feature type="binding site" evidence="1">
    <location>
        <position position="140"/>
    </location>
    <ligand>
        <name>sn-glycerol 3-phosphate</name>
        <dbReference type="ChEBI" id="CHEBI:57597"/>
    </ligand>
</feature>
<feature type="binding site" evidence="1">
    <location>
        <position position="142"/>
    </location>
    <ligand>
        <name>NADPH</name>
        <dbReference type="ChEBI" id="CHEBI:57783"/>
    </ligand>
</feature>
<feature type="binding site" evidence="1">
    <location>
        <position position="194"/>
    </location>
    <ligand>
        <name>sn-glycerol 3-phosphate</name>
        <dbReference type="ChEBI" id="CHEBI:57597"/>
    </ligand>
</feature>
<feature type="binding site" evidence="1">
    <location>
        <position position="247"/>
    </location>
    <ligand>
        <name>sn-glycerol 3-phosphate</name>
        <dbReference type="ChEBI" id="CHEBI:57597"/>
    </ligand>
</feature>
<feature type="binding site" evidence="1">
    <location>
        <position position="257"/>
    </location>
    <ligand>
        <name>sn-glycerol 3-phosphate</name>
        <dbReference type="ChEBI" id="CHEBI:57597"/>
    </ligand>
</feature>
<feature type="binding site" evidence="1">
    <location>
        <position position="258"/>
    </location>
    <ligand>
        <name>NADPH</name>
        <dbReference type="ChEBI" id="CHEBI:57783"/>
    </ligand>
</feature>
<feature type="binding site" evidence="1">
    <location>
        <position position="258"/>
    </location>
    <ligand>
        <name>sn-glycerol 3-phosphate</name>
        <dbReference type="ChEBI" id="CHEBI:57597"/>
    </ligand>
</feature>
<feature type="binding site" evidence="1">
    <location>
        <position position="259"/>
    </location>
    <ligand>
        <name>sn-glycerol 3-phosphate</name>
        <dbReference type="ChEBI" id="CHEBI:57597"/>
    </ligand>
</feature>
<feature type="binding site" evidence="1">
    <location>
        <position position="282"/>
    </location>
    <ligand>
        <name>NADPH</name>
        <dbReference type="ChEBI" id="CHEBI:57783"/>
    </ligand>
</feature>
<feature type="binding site" evidence="1">
    <location>
        <position position="284"/>
    </location>
    <ligand>
        <name>NADPH</name>
        <dbReference type="ChEBI" id="CHEBI:57783"/>
    </ligand>
</feature>
<comment type="function">
    <text evidence="1">Catalyzes the reduction of the glycolytic intermediate dihydroxyacetone phosphate (DHAP) to sn-glycerol 3-phosphate (G3P), the key precursor for phospholipid synthesis.</text>
</comment>
<comment type="catalytic activity">
    <reaction evidence="1">
        <text>sn-glycerol 3-phosphate + NAD(+) = dihydroxyacetone phosphate + NADH + H(+)</text>
        <dbReference type="Rhea" id="RHEA:11092"/>
        <dbReference type="ChEBI" id="CHEBI:15378"/>
        <dbReference type="ChEBI" id="CHEBI:57540"/>
        <dbReference type="ChEBI" id="CHEBI:57597"/>
        <dbReference type="ChEBI" id="CHEBI:57642"/>
        <dbReference type="ChEBI" id="CHEBI:57945"/>
        <dbReference type="EC" id="1.1.1.94"/>
    </reaction>
    <physiologicalReaction direction="right-to-left" evidence="1">
        <dbReference type="Rhea" id="RHEA:11094"/>
    </physiologicalReaction>
</comment>
<comment type="catalytic activity">
    <reaction evidence="1">
        <text>sn-glycerol 3-phosphate + NADP(+) = dihydroxyacetone phosphate + NADPH + H(+)</text>
        <dbReference type="Rhea" id="RHEA:11096"/>
        <dbReference type="ChEBI" id="CHEBI:15378"/>
        <dbReference type="ChEBI" id="CHEBI:57597"/>
        <dbReference type="ChEBI" id="CHEBI:57642"/>
        <dbReference type="ChEBI" id="CHEBI:57783"/>
        <dbReference type="ChEBI" id="CHEBI:58349"/>
        <dbReference type="EC" id="1.1.1.94"/>
    </reaction>
    <physiologicalReaction direction="right-to-left" evidence="1">
        <dbReference type="Rhea" id="RHEA:11098"/>
    </physiologicalReaction>
</comment>
<comment type="pathway">
    <text evidence="1">Membrane lipid metabolism; glycerophospholipid metabolism.</text>
</comment>
<comment type="subcellular location">
    <subcellularLocation>
        <location evidence="1">Cytoplasm</location>
    </subcellularLocation>
</comment>
<comment type="similarity">
    <text evidence="1">Belongs to the NAD-dependent glycerol-3-phosphate dehydrogenase family.</text>
</comment>
<sequence>MPGDASMIVIGAGSYGTALAITLARNGHEVLLWGHDPAHIQALEAVRCNQAFLPDVPFPPTLRLEASLPTALAASRDVLIVVPSHVFGSVLTELKPHLRQDARIVWATKGLEAETGRLLQEVAREVLGDQIPLAVLSGPTFARELAAGLPTAIALAATDATFSADLQRLLHCGKSFRVYSNPDLIGVQLGGAVKNVIAIGAGISDGIGFGANARTALITRGLAEMSRLGAAMGAEPGTFMGMAGLGDLVLTCTDNQSRNRRFGLLLGQGVGFEAVQETIGQVVEGYRNTKEVLALAGRYGVEMPITEQIYQVLYQNKNAHQAALTLLGRAQKDERAGG</sequence>
<protein>
    <recommendedName>
        <fullName evidence="1">Glycerol-3-phosphate dehydrogenase [NAD(P)+]</fullName>
        <ecNumber evidence="1">1.1.1.94</ecNumber>
    </recommendedName>
    <alternativeName>
        <fullName evidence="1">NAD(P)(+)-dependent glycerol-3-phosphate dehydrogenase</fullName>
    </alternativeName>
    <alternativeName>
        <fullName evidence="1">NAD(P)H-dependent dihydroxyacetone-phosphate reductase</fullName>
    </alternativeName>
</protein>
<accession>Q2NQW6</accession>
<organism>
    <name type="scientific">Sodalis glossinidius (strain morsitans)</name>
    <dbReference type="NCBI Taxonomy" id="343509"/>
    <lineage>
        <taxon>Bacteria</taxon>
        <taxon>Pseudomonadati</taxon>
        <taxon>Pseudomonadota</taxon>
        <taxon>Gammaproteobacteria</taxon>
        <taxon>Enterobacterales</taxon>
        <taxon>Bruguierivoracaceae</taxon>
        <taxon>Sodalis</taxon>
    </lineage>
</organism>